<accession>Q32RU9</accession>
<geneLocation type="chloroplast"/>
<name>RK36_STAPU</name>
<protein>
    <recommendedName>
        <fullName evidence="1">Large ribosomal subunit protein bL36c</fullName>
    </recommendedName>
    <alternativeName>
        <fullName evidence="2">50S ribosomal protein L36, chloroplastic</fullName>
    </alternativeName>
</protein>
<proteinExistence type="inferred from homology"/>
<keyword id="KW-0150">Chloroplast</keyword>
<keyword id="KW-0934">Plastid</keyword>
<keyword id="KW-0687">Ribonucleoprotein</keyword>
<keyword id="KW-0689">Ribosomal protein</keyword>
<organism>
    <name type="scientific">Staurastrum punctulatum</name>
    <name type="common">Green alga</name>
    <name type="synonym">Cosmoastrum punctulatum</name>
    <dbReference type="NCBI Taxonomy" id="102822"/>
    <lineage>
        <taxon>Eukaryota</taxon>
        <taxon>Viridiplantae</taxon>
        <taxon>Streptophyta</taxon>
        <taxon>Zygnematophyceae</taxon>
        <taxon>Zygnematophycidae</taxon>
        <taxon>Desmidiales</taxon>
        <taxon>Desmidiaceae</taxon>
        <taxon>Staurastrum</taxon>
    </lineage>
</organism>
<dbReference type="EMBL" id="AY958085">
    <property type="protein sequence ID" value="AAX45745.1"/>
    <property type="molecule type" value="Genomic_DNA"/>
</dbReference>
<dbReference type="RefSeq" id="YP_636427.1">
    <property type="nucleotide sequence ID" value="NC_008116.1"/>
</dbReference>
<dbReference type="SMR" id="Q32RU9"/>
<dbReference type="GeneID" id="4108607"/>
<dbReference type="GO" id="GO:0009507">
    <property type="term" value="C:chloroplast"/>
    <property type="evidence" value="ECO:0007669"/>
    <property type="project" value="UniProtKB-SubCell"/>
</dbReference>
<dbReference type="GO" id="GO:1990904">
    <property type="term" value="C:ribonucleoprotein complex"/>
    <property type="evidence" value="ECO:0007669"/>
    <property type="project" value="UniProtKB-KW"/>
</dbReference>
<dbReference type="GO" id="GO:0005840">
    <property type="term" value="C:ribosome"/>
    <property type="evidence" value="ECO:0007669"/>
    <property type="project" value="UniProtKB-KW"/>
</dbReference>
<dbReference type="GO" id="GO:0003735">
    <property type="term" value="F:structural constituent of ribosome"/>
    <property type="evidence" value="ECO:0007669"/>
    <property type="project" value="InterPro"/>
</dbReference>
<dbReference type="GO" id="GO:0006412">
    <property type="term" value="P:translation"/>
    <property type="evidence" value="ECO:0007669"/>
    <property type="project" value="UniProtKB-UniRule"/>
</dbReference>
<dbReference type="HAMAP" id="MF_00251">
    <property type="entry name" value="Ribosomal_bL36"/>
    <property type="match status" value="1"/>
</dbReference>
<dbReference type="InterPro" id="IPR000473">
    <property type="entry name" value="Ribosomal_bL36"/>
</dbReference>
<dbReference type="InterPro" id="IPR035977">
    <property type="entry name" value="Ribosomal_bL36_sp"/>
</dbReference>
<dbReference type="NCBIfam" id="TIGR01022">
    <property type="entry name" value="rpmJ_bact"/>
    <property type="match status" value="1"/>
</dbReference>
<dbReference type="PANTHER" id="PTHR42888">
    <property type="entry name" value="50S RIBOSOMAL PROTEIN L36, CHLOROPLASTIC"/>
    <property type="match status" value="1"/>
</dbReference>
<dbReference type="PANTHER" id="PTHR42888:SF1">
    <property type="entry name" value="LARGE RIBOSOMAL SUBUNIT PROTEIN BL36C"/>
    <property type="match status" value="1"/>
</dbReference>
<dbReference type="Pfam" id="PF00444">
    <property type="entry name" value="Ribosomal_L36"/>
    <property type="match status" value="1"/>
</dbReference>
<dbReference type="SUPFAM" id="SSF57840">
    <property type="entry name" value="Ribosomal protein L36"/>
    <property type="match status" value="1"/>
</dbReference>
<dbReference type="PROSITE" id="PS00828">
    <property type="entry name" value="RIBOSOMAL_L36"/>
    <property type="match status" value="1"/>
</dbReference>
<feature type="chain" id="PRO_0000276838" description="Large ribosomal subunit protein bL36c">
    <location>
        <begin position="1"/>
        <end position="37"/>
    </location>
</feature>
<evidence type="ECO:0000255" key="1">
    <source>
        <dbReference type="HAMAP-Rule" id="MF_00251"/>
    </source>
</evidence>
<evidence type="ECO:0000305" key="2"/>
<reference key="1">
    <citation type="journal article" date="2005" name="BMC Biol.">
        <title>The complete chloroplast DNA sequences of the charophycean green algae Staurastrum and Zygnema reveal that the chloroplast genome underwent extensive changes during the evolution of the Zygnematales.</title>
        <authorList>
            <person name="Turmel M."/>
            <person name="Otis C."/>
            <person name="Lemieux C."/>
        </authorList>
    </citation>
    <scope>NUCLEOTIDE SEQUENCE [LARGE SCALE GENOMIC DNA]</scope>
</reference>
<gene>
    <name evidence="1" type="primary">rpl36</name>
</gene>
<comment type="subcellular location">
    <subcellularLocation>
        <location>Plastid</location>
        <location>Chloroplast</location>
    </subcellularLocation>
</comment>
<comment type="similarity">
    <text evidence="1">Belongs to the bacterial ribosomal protein bL36 family.</text>
</comment>
<sequence length="37" mass="4384">MKVRASVRKICENCRMIRRRGKVMVVCSNPKHKQRQG</sequence>